<name>VMA22_MOUSE</name>
<accession>Q8VE99</accession>
<accession>Q3TS67</accession>
<reference key="1">
    <citation type="journal article" date="2004" name="Genome Res.">
        <title>The status, quality, and expansion of the NIH full-length cDNA project: the Mammalian Gene Collection (MGC).</title>
        <authorList>
            <consortium name="The MGC Project Team"/>
        </authorList>
    </citation>
    <scope>NUCLEOTIDE SEQUENCE [LARGE SCALE MRNA]</scope>
    <source>
        <strain>Czech II</strain>
        <tissue>Mammary tumor</tissue>
    </source>
</reference>
<reference key="2">
    <citation type="journal article" date="2005" name="Science">
        <title>The transcriptional landscape of the mammalian genome.</title>
        <authorList>
            <person name="Carninci P."/>
            <person name="Kasukawa T."/>
            <person name="Katayama S."/>
            <person name="Gough J."/>
            <person name="Frith M.C."/>
            <person name="Maeda N."/>
            <person name="Oyama R."/>
            <person name="Ravasi T."/>
            <person name="Lenhard B."/>
            <person name="Wells C."/>
            <person name="Kodzius R."/>
            <person name="Shimokawa K."/>
            <person name="Bajic V.B."/>
            <person name="Brenner S.E."/>
            <person name="Batalov S."/>
            <person name="Forrest A.R."/>
            <person name="Zavolan M."/>
            <person name="Davis M.J."/>
            <person name="Wilming L.G."/>
            <person name="Aidinis V."/>
            <person name="Allen J.E."/>
            <person name="Ambesi-Impiombato A."/>
            <person name="Apweiler R."/>
            <person name="Aturaliya R.N."/>
            <person name="Bailey T.L."/>
            <person name="Bansal M."/>
            <person name="Baxter L."/>
            <person name="Beisel K.W."/>
            <person name="Bersano T."/>
            <person name="Bono H."/>
            <person name="Chalk A.M."/>
            <person name="Chiu K.P."/>
            <person name="Choudhary V."/>
            <person name="Christoffels A."/>
            <person name="Clutterbuck D.R."/>
            <person name="Crowe M.L."/>
            <person name="Dalla E."/>
            <person name="Dalrymple B.P."/>
            <person name="de Bono B."/>
            <person name="Della Gatta G."/>
            <person name="di Bernardo D."/>
            <person name="Down T."/>
            <person name="Engstrom P."/>
            <person name="Fagiolini M."/>
            <person name="Faulkner G."/>
            <person name="Fletcher C.F."/>
            <person name="Fukushima T."/>
            <person name="Furuno M."/>
            <person name="Futaki S."/>
            <person name="Gariboldi M."/>
            <person name="Georgii-Hemming P."/>
            <person name="Gingeras T.R."/>
            <person name="Gojobori T."/>
            <person name="Green R.E."/>
            <person name="Gustincich S."/>
            <person name="Harbers M."/>
            <person name="Hayashi Y."/>
            <person name="Hensch T.K."/>
            <person name="Hirokawa N."/>
            <person name="Hill D."/>
            <person name="Huminiecki L."/>
            <person name="Iacono M."/>
            <person name="Ikeo K."/>
            <person name="Iwama A."/>
            <person name="Ishikawa T."/>
            <person name="Jakt M."/>
            <person name="Kanapin A."/>
            <person name="Katoh M."/>
            <person name="Kawasawa Y."/>
            <person name="Kelso J."/>
            <person name="Kitamura H."/>
            <person name="Kitano H."/>
            <person name="Kollias G."/>
            <person name="Krishnan S.P."/>
            <person name="Kruger A."/>
            <person name="Kummerfeld S.K."/>
            <person name="Kurochkin I.V."/>
            <person name="Lareau L.F."/>
            <person name="Lazarevic D."/>
            <person name="Lipovich L."/>
            <person name="Liu J."/>
            <person name="Liuni S."/>
            <person name="McWilliam S."/>
            <person name="Madan Babu M."/>
            <person name="Madera M."/>
            <person name="Marchionni L."/>
            <person name="Matsuda H."/>
            <person name="Matsuzawa S."/>
            <person name="Miki H."/>
            <person name="Mignone F."/>
            <person name="Miyake S."/>
            <person name="Morris K."/>
            <person name="Mottagui-Tabar S."/>
            <person name="Mulder N."/>
            <person name="Nakano N."/>
            <person name="Nakauchi H."/>
            <person name="Ng P."/>
            <person name="Nilsson R."/>
            <person name="Nishiguchi S."/>
            <person name="Nishikawa S."/>
            <person name="Nori F."/>
            <person name="Ohara O."/>
            <person name="Okazaki Y."/>
            <person name="Orlando V."/>
            <person name="Pang K.C."/>
            <person name="Pavan W.J."/>
            <person name="Pavesi G."/>
            <person name="Pesole G."/>
            <person name="Petrovsky N."/>
            <person name="Piazza S."/>
            <person name="Reed J."/>
            <person name="Reid J.F."/>
            <person name="Ring B.Z."/>
            <person name="Ringwald M."/>
            <person name="Rost B."/>
            <person name="Ruan Y."/>
            <person name="Salzberg S.L."/>
            <person name="Sandelin A."/>
            <person name="Schneider C."/>
            <person name="Schoenbach C."/>
            <person name="Sekiguchi K."/>
            <person name="Semple C.A."/>
            <person name="Seno S."/>
            <person name="Sessa L."/>
            <person name="Sheng Y."/>
            <person name="Shibata Y."/>
            <person name="Shimada H."/>
            <person name="Shimada K."/>
            <person name="Silva D."/>
            <person name="Sinclair B."/>
            <person name="Sperling S."/>
            <person name="Stupka E."/>
            <person name="Sugiura K."/>
            <person name="Sultana R."/>
            <person name="Takenaka Y."/>
            <person name="Taki K."/>
            <person name="Tammoja K."/>
            <person name="Tan S.L."/>
            <person name="Tang S."/>
            <person name="Taylor M.S."/>
            <person name="Tegner J."/>
            <person name="Teichmann S.A."/>
            <person name="Ueda H.R."/>
            <person name="van Nimwegen E."/>
            <person name="Verardo R."/>
            <person name="Wei C.L."/>
            <person name="Yagi K."/>
            <person name="Yamanishi H."/>
            <person name="Zabarovsky E."/>
            <person name="Zhu S."/>
            <person name="Zimmer A."/>
            <person name="Hide W."/>
            <person name="Bult C."/>
            <person name="Grimmond S.M."/>
            <person name="Teasdale R.D."/>
            <person name="Liu E.T."/>
            <person name="Brusic V."/>
            <person name="Quackenbush J."/>
            <person name="Wahlestedt C."/>
            <person name="Mattick J.S."/>
            <person name="Hume D.A."/>
            <person name="Kai C."/>
            <person name="Sasaki D."/>
            <person name="Tomaru Y."/>
            <person name="Fukuda S."/>
            <person name="Kanamori-Katayama M."/>
            <person name="Suzuki M."/>
            <person name="Aoki J."/>
            <person name="Arakawa T."/>
            <person name="Iida J."/>
            <person name="Imamura K."/>
            <person name="Itoh M."/>
            <person name="Kato T."/>
            <person name="Kawaji H."/>
            <person name="Kawagashira N."/>
            <person name="Kawashima T."/>
            <person name="Kojima M."/>
            <person name="Kondo S."/>
            <person name="Konno H."/>
            <person name="Nakano K."/>
            <person name="Ninomiya N."/>
            <person name="Nishio T."/>
            <person name="Okada M."/>
            <person name="Plessy C."/>
            <person name="Shibata K."/>
            <person name="Shiraki T."/>
            <person name="Suzuki S."/>
            <person name="Tagami M."/>
            <person name="Waki K."/>
            <person name="Watahiki A."/>
            <person name="Okamura-Oho Y."/>
            <person name="Suzuki H."/>
            <person name="Kawai J."/>
            <person name="Hayashizaki Y."/>
        </authorList>
    </citation>
    <scope>NUCLEOTIDE SEQUENCE [LARGE SCALE MRNA] OF 19-180</scope>
    <source>
        <strain>C57BL/6J</strain>
        <tissue>Tongue</tissue>
    </source>
</reference>
<reference key="3">
    <citation type="journal article" date="2006" name="Gene Expr. Patterns">
        <title>Expression of coiled-coil protein 1, a novel gene downstream of FGF2, in the developing brain.</title>
        <authorList>
            <person name="Pellicano F."/>
            <person name="Inglis-Broadgate S.L."/>
            <person name="Pante G."/>
            <person name="Ansorge W."/>
            <person name="Iwata T."/>
        </authorList>
    </citation>
    <scope>SUBCELLULAR LOCATION</scope>
    <scope>TISSUE SPECIFICITY</scope>
    <scope>DEVELOPMENTAL STAGE</scope>
    <scope>INDUCTION</scope>
</reference>
<reference key="4">
    <citation type="journal article" date="2010" name="Cell">
        <title>A tissue-specific atlas of mouse protein phosphorylation and expression.</title>
        <authorList>
            <person name="Huttlin E.L."/>
            <person name="Jedrychowski M.P."/>
            <person name="Elias J.E."/>
            <person name="Goswami T."/>
            <person name="Rad R."/>
            <person name="Beausoleil S.A."/>
            <person name="Villen J."/>
            <person name="Haas W."/>
            <person name="Sowa M.E."/>
            <person name="Gygi S.P."/>
        </authorList>
    </citation>
    <scope>IDENTIFICATION BY MASS SPECTROMETRY [LARGE SCALE ANALYSIS]</scope>
    <source>
        <tissue>Brain</tissue>
        <tissue>Brown adipose tissue</tissue>
        <tissue>Kidney</tissue>
        <tissue>Liver</tissue>
        <tissue>Lung</tissue>
        <tissue>Pancreas</tissue>
        <tissue>Spleen</tissue>
        <tissue>Testis</tissue>
    </source>
</reference>
<keyword id="KW-0175">Coiled coil</keyword>
<keyword id="KW-0968">Cytoplasmic vesicle</keyword>
<keyword id="KW-0256">Endoplasmic reticulum</keyword>
<keyword id="KW-0967">Endosome</keyword>
<keyword id="KW-0458">Lysosome</keyword>
<keyword id="KW-1185">Reference proteome</keyword>
<feature type="chain" id="PRO_0000279404" description="Vacuolar ATPase assembly protein VMA22">
    <location>
        <begin position="1"/>
        <end position="180"/>
    </location>
</feature>
<feature type="region of interest" description="Disordered" evidence="3">
    <location>
        <begin position="90"/>
        <end position="113"/>
    </location>
</feature>
<feature type="coiled-coil region" evidence="2">
    <location>
        <begin position="4"/>
        <end position="38"/>
    </location>
</feature>
<organism>
    <name type="scientific">Mus musculus</name>
    <name type="common">Mouse</name>
    <dbReference type="NCBI Taxonomy" id="10090"/>
    <lineage>
        <taxon>Eukaryota</taxon>
        <taxon>Metazoa</taxon>
        <taxon>Chordata</taxon>
        <taxon>Craniata</taxon>
        <taxon>Vertebrata</taxon>
        <taxon>Euteleostomi</taxon>
        <taxon>Mammalia</taxon>
        <taxon>Eutheria</taxon>
        <taxon>Euarchontoglires</taxon>
        <taxon>Glires</taxon>
        <taxon>Rodentia</taxon>
        <taxon>Myomorpha</taxon>
        <taxon>Muroidea</taxon>
        <taxon>Muridae</taxon>
        <taxon>Murinae</taxon>
        <taxon>Mus</taxon>
        <taxon>Mus</taxon>
    </lineage>
</organism>
<gene>
    <name type="primary">Vma22</name>
    <name type="synonym">Ccdc115</name>
</gene>
<protein>
    <recommendedName>
        <fullName>Vacuolar ATPase assembly protein VMA22</fullName>
    </recommendedName>
    <alternativeName>
        <fullName>Coiled-coil domain-containing protein 115</fullName>
    </alternativeName>
    <alternativeName>
        <fullName evidence="5">Coiled-coil protein 1</fullName>
        <shortName evidence="5">Ccp1</shortName>
    </alternativeName>
</protein>
<dbReference type="EMBL" id="BC019430">
    <property type="protein sequence ID" value="AAH19430.1"/>
    <property type="molecule type" value="mRNA"/>
</dbReference>
<dbReference type="EMBL" id="AK162237">
    <property type="protein sequence ID" value="BAE36808.1"/>
    <property type="molecule type" value="mRNA"/>
</dbReference>
<dbReference type="CCDS" id="CCDS14866.1"/>
<dbReference type="RefSeq" id="NP_081435.1">
    <property type="nucleotide sequence ID" value="NM_027159.2"/>
</dbReference>
<dbReference type="SMR" id="Q8VE99"/>
<dbReference type="BioGRID" id="213602">
    <property type="interactions" value="1"/>
</dbReference>
<dbReference type="FunCoup" id="Q8VE99">
    <property type="interactions" value="2982"/>
</dbReference>
<dbReference type="STRING" id="10090.ENSMUSP00000042918"/>
<dbReference type="iPTMnet" id="Q8VE99"/>
<dbReference type="PhosphoSitePlus" id="Q8VE99"/>
<dbReference type="SwissPalm" id="Q8VE99"/>
<dbReference type="PaxDb" id="10090-ENSMUSP00000042918"/>
<dbReference type="PeptideAtlas" id="Q8VE99"/>
<dbReference type="ProteomicsDB" id="265577"/>
<dbReference type="Pumba" id="Q8VE99"/>
<dbReference type="Antibodypedia" id="33494">
    <property type="antibodies" value="69 antibodies from 20 providers"/>
</dbReference>
<dbReference type="DNASU" id="69668"/>
<dbReference type="Ensembl" id="ENSMUST00000042493.10">
    <property type="protein sequence ID" value="ENSMUSP00000042918.9"/>
    <property type="gene ID" value="ENSMUSG00000042111.10"/>
</dbReference>
<dbReference type="GeneID" id="69668"/>
<dbReference type="KEGG" id="mmu:69668"/>
<dbReference type="UCSC" id="uc011wja.1">
    <property type="organism name" value="mouse"/>
</dbReference>
<dbReference type="AGR" id="MGI:1916918"/>
<dbReference type="CTD" id="69668"/>
<dbReference type="MGI" id="MGI:1916918">
    <property type="gene designation" value="Ccdc115"/>
</dbReference>
<dbReference type="VEuPathDB" id="HostDB:ENSMUSG00000042111"/>
<dbReference type="eggNOG" id="ENOG502S392">
    <property type="taxonomic scope" value="Eukaryota"/>
</dbReference>
<dbReference type="GeneTree" id="ENSGT00390000012929"/>
<dbReference type="HOGENOM" id="CLU_107415_0_0_1"/>
<dbReference type="InParanoid" id="Q8VE99"/>
<dbReference type="OMA" id="RMEPRVC"/>
<dbReference type="OrthoDB" id="408631at2759"/>
<dbReference type="PhylomeDB" id="Q8VE99"/>
<dbReference type="TreeFam" id="TF324647"/>
<dbReference type="Reactome" id="R-MMU-8980692">
    <property type="pathway name" value="RHOA GTPase cycle"/>
</dbReference>
<dbReference type="BioGRID-ORCS" id="69668">
    <property type="hits" value="28 hits in 76 CRISPR screens"/>
</dbReference>
<dbReference type="ChiTaRS" id="Ccdc115">
    <property type="organism name" value="mouse"/>
</dbReference>
<dbReference type="PRO" id="PR:Q8VE99"/>
<dbReference type="Proteomes" id="UP000000589">
    <property type="component" value="Chromosome 1"/>
</dbReference>
<dbReference type="RNAct" id="Q8VE99">
    <property type="molecule type" value="protein"/>
</dbReference>
<dbReference type="Bgee" id="ENSMUSG00000042111">
    <property type="expression patterns" value="Expressed in primary oocyte and 134 other cell types or tissues"/>
</dbReference>
<dbReference type="GO" id="GO:0030137">
    <property type="term" value="C:COPI-coated vesicle"/>
    <property type="evidence" value="ECO:0000250"/>
    <property type="project" value="UniProtKB"/>
</dbReference>
<dbReference type="GO" id="GO:0005783">
    <property type="term" value="C:endoplasmic reticulum"/>
    <property type="evidence" value="ECO:0000250"/>
    <property type="project" value="UniProtKB"/>
</dbReference>
<dbReference type="GO" id="GO:0005793">
    <property type="term" value="C:endoplasmic reticulum-Golgi intermediate compartment"/>
    <property type="evidence" value="ECO:0000250"/>
    <property type="project" value="UniProtKB"/>
</dbReference>
<dbReference type="GO" id="GO:0005768">
    <property type="term" value="C:endosome"/>
    <property type="evidence" value="ECO:0007669"/>
    <property type="project" value="UniProtKB-SubCell"/>
</dbReference>
<dbReference type="GO" id="GO:0005764">
    <property type="term" value="C:lysosome"/>
    <property type="evidence" value="ECO:0000314"/>
    <property type="project" value="MGI"/>
</dbReference>
<dbReference type="GO" id="GO:0016471">
    <property type="term" value="C:vacuolar proton-transporting V-type ATPase complex"/>
    <property type="evidence" value="ECO:0000250"/>
    <property type="project" value="UniProtKB"/>
</dbReference>
<dbReference type="GO" id="GO:0036295">
    <property type="term" value="P:cellular response to increased oxygen levels"/>
    <property type="evidence" value="ECO:0000250"/>
    <property type="project" value="UniProtKB"/>
</dbReference>
<dbReference type="GO" id="GO:0006879">
    <property type="term" value="P:intracellular iron ion homeostasis"/>
    <property type="evidence" value="ECO:0000250"/>
    <property type="project" value="UniProtKB"/>
</dbReference>
<dbReference type="GO" id="GO:0007042">
    <property type="term" value="P:lysosomal lumen acidification"/>
    <property type="evidence" value="ECO:0000250"/>
    <property type="project" value="UniProtKB"/>
</dbReference>
<dbReference type="GO" id="GO:1905146">
    <property type="term" value="P:lysosomal protein catabolic process"/>
    <property type="evidence" value="ECO:0000250"/>
    <property type="project" value="UniProtKB"/>
</dbReference>
<dbReference type="GO" id="GO:0070072">
    <property type="term" value="P:vacuolar proton-transporting V-type ATPase complex assembly"/>
    <property type="evidence" value="ECO:0007669"/>
    <property type="project" value="InterPro"/>
</dbReference>
<dbReference type="FunFam" id="1.10.287.3240:FF:000005">
    <property type="entry name" value="coiled-coil domain-containing protein 115"/>
    <property type="match status" value="1"/>
</dbReference>
<dbReference type="Gene3D" id="1.10.287.3240">
    <property type="match status" value="1"/>
</dbReference>
<dbReference type="InterPro" id="IPR040357">
    <property type="entry name" value="Vma22/CCDC115"/>
</dbReference>
<dbReference type="PANTHER" id="PTHR31996">
    <property type="entry name" value="COILED-COIL DOMAIN-CONTAINING PROTEIN 115"/>
    <property type="match status" value="1"/>
</dbReference>
<dbReference type="PANTHER" id="PTHR31996:SF2">
    <property type="entry name" value="COILED-COIL DOMAIN-CONTAINING PROTEIN 115"/>
    <property type="match status" value="1"/>
</dbReference>
<dbReference type="Pfam" id="PF21730">
    <property type="entry name" value="Vma22_CCDC115"/>
    <property type="match status" value="1"/>
</dbReference>
<proteinExistence type="evidence at protein level"/>
<comment type="function">
    <text evidence="1">Accessory component of the proton-transporting vacuolar (V)-ATPase protein pump involved in intracellular iron homeostasis. In aerobic conditions, required for intracellular iron homeostasis, thus triggering the activity of Fe(2+) prolyl hydroxylase (PHD) enzymes, and leading to HIF1A hydroxylation and subsequent proteasomal degradation. Necessary for endolysosomal acidification and lysosomal degradation (By similarity). May be involved in Golgi homeostasis (By similarity).</text>
</comment>
<comment type="subunit">
    <text evidence="1">Accessory component of the multisubunit proton-transporting vacuolar (V)-ATPase protein pump.</text>
</comment>
<comment type="subcellular location">
    <subcellularLocation>
        <location evidence="4">Endosome</location>
    </subcellularLocation>
    <subcellularLocation>
        <location evidence="4">Lysosome</location>
    </subcellularLocation>
    <subcellularLocation>
        <location evidence="1">Endoplasmic reticulum-Golgi intermediate compartment</location>
    </subcellularLocation>
    <subcellularLocation>
        <location evidence="1">Cytoplasmic vesicle</location>
        <location evidence="1">COPI-coated vesicle</location>
    </subcellularLocation>
    <subcellularLocation>
        <location evidence="1">Endoplasmic reticulum</location>
    </subcellularLocation>
    <text evidence="4">Seems not to be associated with recycling endosomes.</text>
</comment>
<comment type="tissue specificity">
    <text evidence="4">Predominantly expressed in the heart, liver, kidney and testis and at lower levels in the brain and lung. Undetectable in the spleen and muscles.</text>
</comment>
<comment type="developmental stage">
    <text evidence="4">Strongly expressed at 13.5 dpc in a ventro-lateral area of striatum and piriform cortex. At 14.5 dpc, some of the positive cells shift toward the cortical plate. At this stage, strongly observed at the superficial layer of dorsal cortex, whereas that of ventral cortex decreases in its intensity. Expression extended further dorsally at 16.5 dpc. In the dorsal cortex, expressed in the ventricular zone at 13.5 dpc. At later stages, expression shifts to the cortical plate. At 15.5 dpc, localizes to both ventricular zone and cortical plate. At 16.5 dpc, almost all expression is in the deeper cortical plate, although some expressing cells are still detectable in the ventricular zone. In the lateral cortex, weak expression in the lateral ganglionic eminence at 13.5 dpc. At 15.5 dpc, strongly detected in the progenitor zones of the lateral ganglionic eminence and medial ganglionic eminence, as well as in tangentially migrating cells in the superficial area of lateral cortex. In the striatum and ventro-lateral cortex, expressed at both 13.5 dpc and 15.5 dpc.</text>
</comment>
<comment type="induction">
    <text evidence="4">Modestly up-regulated by FGF2.</text>
</comment>
<evidence type="ECO:0000250" key="1">
    <source>
        <dbReference type="UniProtKB" id="Q96NT0"/>
    </source>
</evidence>
<evidence type="ECO:0000255" key="2"/>
<evidence type="ECO:0000256" key="3">
    <source>
        <dbReference type="SAM" id="MobiDB-lite"/>
    </source>
</evidence>
<evidence type="ECO:0000269" key="4">
    <source>
    </source>
</evidence>
<evidence type="ECO:0000303" key="5">
    <source>
    </source>
</evidence>
<sequence>MAVQALREELDSKCLQLLSDLEELEAKRAALNARVEEGWLSLAKARYAMGAKSVGPLQYASRMEPQVCVRASEAQDGPQTFRVIKADAQTPEEVGPSEASLRRRKGPTKTKELGSAVVPQDPLNWFGILVPHSLRQAQASFRDGLQLAADIASLQTRINWGQSQLRGLQKKLKELDPGPA</sequence>